<gene>
    <name evidence="1" type="primary">trpF</name>
    <name type="ordered locus">Zymop_0633</name>
</gene>
<accession>Q9S3U4</accession>
<accession>F8ERS7</accession>
<keyword id="KW-0028">Amino-acid biosynthesis</keyword>
<keyword id="KW-0057">Aromatic amino acid biosynthesis</keyword>
<keyword id="KW-0413">Isomerase</keyword>
<keyword id="KW-0822">Tryptophan biosynthesis</keyword>
<feature type="chain" id="PRO_0000154396" description="N-(5'-phosphoribosyl)anthranilate isomerase">
    <location>
        <begin position="1"/>
        <end position="211"/>
    </location>
</feature>
<feature type="sequence conflict" description="In Ref. 1; AAD51337." evidence="2" ref="1">
    <original>I</original>
    <variation>L</variation>
    <location>
        <position position="10"/>
    </location>
</feature>
<feature type="sequence conflict" description="In Ref. 1; AAD51337." evidence="2" ref="1">
    <original>PETLLAAVKNGASH</original>
    <variation>EETVETAVRYGADY</variation>
    <location>
        <begin position="13"/>
        <end position="26"/>
    </location>
</feature>
<feature type="sequence conflict" description="In Ref. 1; AAD51337." evidence="2" ref="1">
    <original>AVQPEMAS</original>
    <variation>SVTPEKAA</variation>
    <location>
        <begin position="38"/>
        <end position="45"/>
    </location>
</feature>
<feature type="sequence conflict" description="In Ref. 1; AAD51337." evidence="2" ref="1">
    <original>NR</original>
    <variation>RQ</variation>
    <location>
        <begin position="49"/>
        <end position="50"/>
    </location>
</feature>
<feature type="sequence conflict" description="In Ref. 1; AAD51337." evidence="2" ref="1">
    <original>ID</original>
    <variation>VQ</variation>
    <location>
        <begin position="55"/>
        <end position="56"/>
    </location>
</feature>
<feature type="sequence conflict" description="In Ref. 1; AAD51337." evidence="2" ref="1">
    <original>L</original>
    <variation>F</variation>
    <location>
        <position position="61"/>
    </location>
</feature>
<feature type="sequence conflict" description="In Ref. 1; AAD51337." evidence="2" ref="1">
    <original>D</original>
    <variation>N</variation>
    <location>
        <position position="66"/>
    </location>
</feature>
<feature type="sequence conflict" description="In Ref. 1; AAD51337." evidence="2" ref="1">
    <original>VVHA</original>
    <variation>ALAS</variation>
    <location>
        <begin position="72"/>
        <end position="75"/>
    </location>
</feature>
<feature type="sequence conflict" description="In Ref. 1; AAD51337." evidence="2" ref="1">
    <original>P</original>
    <variation>A</variation>
    <location>
        <position position="88"/>
    </location>
</feature>
<feature type="sequence conflict" description="In Ref. 1; AAD51337." evidence="2" ref="1">
    <original>VAFIRR</original>
    <variation>IASIRE</variation>
    <location>
        <begin position="91"/>
        <end position="96"/>
    </location>
</feature>
<feature type="sequence conflict" description="In Ref. 1; AAD51337." evidence="2" ref="1">
    <original>PITR</original>
    <variation>SIAN</variation>
    <location>
        <begin position="108"/>
        <end position="111"/>
    </location>
</feature>
<feature type="sequence conflict" description="In Ref. 1; AAD51337." evidence="2" ref="1">
    <original>DQTL</original>
    <variation>AQAP</variation>
    <location>
        <begin position="116"/>
        <end position="119"/>
    </location>
</feature>
<feature type="sequence conflict" description="In Ref. 1; AAD51337." evidence="2" ref="1">
    <original>V</original>
    <variation>A</variation>
    <location>
        <position position="125"/>
    </location>
</feature>
<feature type="sequence conflict" description="In Ref. 1; AAD51337." evidence="2" ref="1">
    <original>V</original>
    <variation>L</variation>
    <location>
        <position position="128"/>
    </location>
</feature>
<feature type="sequence conflict" description="In Ref. 1; AAD51337." evidence="2" ref="1">
    <original>A</original>
    <variation>V</variation>
    <location>
        <position position="137"/>
    </location>
</feature>
<feature type="sequence conflict" description="In Ref. 1; AAD51337." evidence="2" ref="1">
    <original>K</original>
    <variation>R</variation>
    <location>
        <position position="144"/>
    </location>
</feature>
<feature type="sequence conflict" description="In Ref. 1; AAD51337." evidence="2" ref="1">
    <original>DYNHPMA</original>
    <variation>EYKHPLP</variation>
    <location>
        <begin position="153"/>
        <end position="159"/>
    </location>
</feature>
<feature type="sequence conflict" description="In Ref. 1; AAD51337." evidence="2" ref="1">
    <original>D</original>
    <variation>H</variation>
    <location>
        <position position="169"/>
    </location>
</feature>
<feature type="sequence conflict" description="In Ref. 1; AAD51337." evidence="2" ref="1">
    <original>V</original>
    <variation>I</variation>
    <location>
        <position position="185"/>
    </location>
</feature>
<feature type="sequence conflict" description="In Ref. 1; AAD51337." evidence="2" ref="1">
    <original>A</original>
    <variation>S</variation>
    <location>
        <position position="192"/>
    </location>
</feature>
<proteinExistence type="inferred from homology"/>
<evidence type="ECO:0000255" key="1">
    <source>
        <dbReference type="HAMAP-Rule" id="MF_00135"/>
    </source>
</evidence>
<evidence type="ECO:0000305" key="2"/>
<dbReference type="EC" id="5.3.1.24" evidence="1"/>
<dbReference type="EMBL" id="AF173835">
    <property type="protein sequence ID" value="AAD51337.1"/>
    <property type="molecule type" value="Genomic_DNA"/>
</dbReference>
<dbReference type="EMBL" id="CP002865">
    <property type="protein sequence ID" value="AEI37535.1"/>
    <property type="molecule type" value="Genomic_DNA"/>
</dbReference>
<dbReference type="RefSeq" id="WP_013933934.1">
    <property type="nucleotide sequence ID" value="NC_015709.1"/>
</dbReference>
<dbReference type="SMR" id="Q9S3U4"/>
<dbReference type="STRING" id="579138.Zymop_0633"/>
<dbReference type="KEGG" id="zmp:Zymop_0633"/>
<dbReference type="PATRIC" id="fig|579138.3.peg.666"/>
<dbReference type="eggNOG" id="COG0135">
    <property type="taxonomic scope" value="Bacteria"/>
</dbReference>
<dbReference type="HOGENOM" id="CLU_076364_1_1_5"/>
<dbReference type="UniPathway" id="UPA00035">
    <property type="reaction ID" value="UER00042"/>
</dbReference>
<dbReference type="Proteomes" id="UP000000491">
    <property type="component" value="Chromosome"/>
</dbReference>
<dbReference type="GO" id="GO:0004640">
    <property type="term" value="F:phosphoribosylanthranilate isomerase activity"/>
    <property type="evidence" value="ECO:0007669"/>
    <property type="project" value="UniProtKB-UniRule"/>
</dbReference>
<dbReference type="GO" id="GO:0000162">
    <property type="term" value="P:L-tryptophan biosynthetic process"/>
    <property type="evidence" value="ECO:0007669"/>
    <property type="project" value="UniProtKB-UniRule"/>
</dbReference>
<dbReference type="CDD" id="cd00405">
    <property type="entry name" value="PRAI"/>
    <property type="match status" value="1"/>
</dbReference>
<dbReference type="Gene3D" id="3.20.20.70">
    <property type="entry name" value="Aldolase class I"/>
    <property type="match status" value="1"/>
</dbReference>
<dbReference type="HAMAP" id="MF_00135">
    <property type="entry name" value="PRAI"/>
    <property type="match status" value="1"/>
</dbReference>
<dbReference type="InterPro" id="IPR013785">
    <property type="entry name" value="Aldolase_TIM"/>
</dbReference>
<dbReference type="InterPro" id="IPR001240">
    <property type="entry name" value="PRAI_dom"/>
</dbReference>
<dbReference type="InterPro" id="IPR011060">
    <property type="entry name" value="RibuloseP-bd_barrel"/>
</dbReference>
<dbReference type="InterPro" id="IPR044643">
    <property type="entry name" value="TrpF_fam"/>
</dbReference>
<dbReference type="NCBIfam" id="NF002295">
    <property type="entry name" value="PRK01222.1-1"/>
    <property type="match status" value="1"/>
</dbReference>
<dbReference type="PANTHER" id="PTHR42894">
    <property type="entry name" value="N-(5'-PHOSPHORIBOSYL)ANTHRANILATE ISOMERASE"/>
    <property type="match status" value="1"/>
</dbReference>
<dbReference type="PANTHER" id="PTHR42894:SF1">
    <property type="entry name" value="N-(5'-PHOSPHORIBOSYL)ANTHRANILATE ISOMERASE"/>
    <property type="match status" value="1"/>
</dbReference>
<dbReference type="Pfam" id="PF00697">
    <property type="entry name" value="PRAI"/>
    <property type="match status" value="1"/>
</dbReference>
<dbReference type="SUPFAM" id="SSF51366">
    <property type="entry name" value="Ribulose-phoshate binding barrel"/>
    <property type="match status" value="1"/>
</dbReference>
<protein>
    <recommendedName>
        <fullName evidence="1">N-(5'-phosphoribosyl)anthranilate isomerase</fullName>
        <shortName evidence="1">PRAI</shortName>
        <ecNumber evidence="1">5.3.1.24</ecNumber>
    </recommendedName>
</protein>
<comment type="catalytic activity">
    <reaction evidence="1">
        <text>N-(5-phospho-beta-D-ribosyl)anthranilate = 1-(2-carboxyphenylamino)-1-deoxy-D-ribulose 5-phosphate</text>
        <dbReference type="Rhea" id="RHEA:21540"/>
        <dbReference type="ChEBI" id="CHEBI:18277"/>
        <dbReference type="ChEBI" id="CHEBI:58613"/>
        <dbReference type="EC" id="5.3.1.24"/>
    </reaction>
</comment>
<comment type="pathway">
    <text evidence="1">Amino-acid biosynthesis; L-tryptophan biosynthesis; L-tryptophan from chorismate: step 3/5.</text>
</comment>
<comment type="similarity">
    <text evidence="1">Belongs to the TrpF family.</text>
</comment>
<reference key="1">
    <citation type="submission" date="1999-07" db="EMBL/GenBank/DDBJ databases">
        <title>Zymomonas trpFBA genes.</title>
        <authorList>
            <person name="Eddy C.K."/>
            <person name="Ingram L.O."/>
        </authorList>
    </citation>
    <scope>NUCLEOTIDE SEQUENCE [GENOMIC DNA]</scope>
    <source>
        <strain>ATCC 29192 / DSM 22645 / JCM 10191 / CCUG 17912 / NBRC 13757 / NCIMB 11200 / NRRL B-4491 / Barker I</strain>
    </source>
</reference>
<reference key="2">
    <citation type="journal article" date="2011" name="J. Bacteriol.">
        <title>Genome sequence of the ethanol-producing Zymomonas mobilis subsp. pomaceae lectotype strain ATCC 29192.</title>
        <authorList>
            <person name="Kouvelis V.N."/>
            <person name="Davenport K.W."/>
            <person name="Brettin T.S."/>
            <person name="Bruce D."/>
            <person name="Detter C."/>
            <person name="Han C.S."/>
            <person name="Nolan M."/>
            <person name="Tapia R."/>
            <person name="Damoulaki A."/>
            <person name="Kyrpides N.C."/>
            <person name="Typas M.A."/>
            <person name="Pappas K.M."/>
        </authorList>
    </citation>
    <scope>NUCLEOTIDE SEQUENCE [LARGE SCALE GENOMIC DNA]</scope>
    <source>
        <strain>ATCC 29192 / DSM 22645 / JCM 10191 / CCUG 17912 / NBRC 13757 / NCIMB 11200 / NRRL B-4491 / Barker I</strain>
    </source>
</reference>
<sequence length="211" mass="23262">MSVRTKICGISTPETLLAAVKNGASHIGFVFFEKSPRAVQPEMASMLINRIPDHIDKIGVLVDPDDNLLERVVHAGLTGFQLHGHETPERVAFIRRTFPKVKIWKALPITRSQDLDQTLHYRGLVDRVLYDARTDGALPGGMGKRFDWRLLKDYNHPMAWALSGGLDADNIAQAVAITGAELVDVSSGVETAPGIKDMDKIAQFLQAVRLL</sequence>
<organism>
    <name type="scientific">Zymomonas mobilis subsp. pomaceae (strain ATCC 29192 / DSM 22645 / JCM 10191 / CCUG 17912 / NBRC 13757 / NCIMB 11200 / NRRL B-4491 / Barker I)</name>
    <dbReference type="NCBI Taxonomy" id="579138"/>
    <lineage>
        <taxon>Bacteria</taxon>
        <taxon>Pseudomonadati</taxon>
        <taxon>Pseudomonadota</taxon>
        <taxon>Alphaproteobacteria</taxon>
        <taxon>Sphingomonadales</taxon>
        <taxon>Zymomonadaceae</taxon>
        <taxon>Zymomonas</taxon>
    </lineage>
</organism>
<name>TRPF_ZYMMT</name>